<evidence type="ECO:0000255" key="1">
    <source>
        <dbReference type="HAMAP-Rule" id="MF_00382"/>
    </source>
</evidence>
<evidence type="ECO:0000305" key="2"/>
<organism>
    <name type="scientific">Chlorobium phaeobacteroides (strain DSM 266 / SMG 266 / 2430)</name>
    <dbReference type="NCBI Taxonomy" id="290317"/>
    <lineage>
        <taxon>Bacteria</taxon>
        <taxon>Pseudomonadati</taxon>
        <taxon>Chlorobiota</taxon>
        <taxon>Chlorobiia</taxon>
        <taxon>Chlorobiales</taxon>
        <taxon>Chlorobiaceae</taxon>
        <taxon>Chlorobium/Pelodictyon group</taxon>
        <taxon>Chlorobium</taxon>
    </lineage>
</organism>
<proteinExistence type="inferred from homology"/>
<gene>
    <name evidence="1" type="primary">rplT</name>
    <name type="ordered locus">Cpha266_2504</name>
</gene>
<feature type="chain" id="PRO_1000048953" description="Large ribosomal subunit protein bL20">
    <location>
        <begin position="1"/>
        <end position="115"/>
    </location>
</feature>
<protein>
    <recommendedName>
        <fullName evidence="1">Large ribosomal subunit protein bL20</fullName>
    </recommendedName>
    <alternativeName>
        <fullName evidence="2">50S ribosomal protein L20</fullName>
    </alternativeName>
</protein>
<dbReference type="EMBL" id="CP000492">
    <property type="protein sequence ID" value="ABL66492.1"/>
    <property type="molecule type" value="Genomic_DNA"/>
</dbReference>
<dbReference type="RefSeq" id="WP_011746269.1">
    <property type="nucleotide sequence ID" value="NC_008639.1"/>
</dbReference>
<dbReference type="SMR" id="A1BJB5"/>
<dbReference type="STRING" id="290317.Cpha266_2504"/>
<dbReference type="KEGG" id="cph:Cpha266_2504"/>
<dbReference type="eggNOG" id="COG0292">
    <property type="taxonomic scope" value="Bacteria"/>
</dbReference>
<dbReference type="HOGENOM" id="CLU_123265_0_1_10"/>
<dbReference type="OrthoDB" id="9808966at2"/>
<dbReference type="Proteomes" id="UP000008701">
    <property type="component" value="Chromosome"/>
</dbReference>
<dbReference type="GO" id="GO:1990904">
    <property type="term" value="C:ribonucleoprotein complex"/>
    <property type="evidence" value="ECO:0007669"/>
    <property type="project" value="UniProtKB-KW"/>
</dbReference>
<dbReference type="GO" id="GO:0005840">
    <property type="term" value="C:ribosome"/>
    <property type="evidence" value="ECO:0007669"/>
    <property type="project" value="UniProtKB-KW"/>
</dbReference>
<dbReference type="GO" id="GO:0019843">
    <property type="term" value="F:rRNA binding"/>
    <property type="evidence" value="ECO:0007669"/>
    <property type="project" value="UniProtKB-UniRule"/>
</dbReference>
<dbReference type="GO" id="GO:0003735">
    <property type="term" value="F:structural constituent of ribosome"/>
    <property type="evidence" value="ECO:0007669"/>
    <property type="project" value="InterPro"/>
</dbReference>
<dbReference type="GO" id="GO:0000027">
    <property type="term" value="P:ribosomal large subunit assembly"/>
    <property type="evidence" value="ECO:0007669"/>
    <property type="project" value="UniProtKB-UniRule"/>
</dbReference>
<dbReference type="GO" id="GO:0006412">
    <property type="term" value="P:translation"/>
    <property type="evidence" value="ECO:0007669"/>
    <property type="project" value="InterPro"/>
</dbReference>
<dbReference type="CDD" id="cd07026">
    <property type="entry name" value="Ribosomal_L20"/>
    <property type="match status" value="1"/>
</dbReference>
<dbReference type="FunFam" id="1.10.1900.20:FF:000001">
    <property type="entry name" value="50S ribosomal protein L20"/>
    <property type="match status" value="1"/>
</dbReference>
<dbReference type="Gene3D" id="6.10.160.10">
    <property type="match status" value="1"/>
</dbReference>
<dbReference type="Gene3D" id="1.10.1900.20">
    <property type="entry name" value="Ribosomal protein L20"/>
    <property type="match status" value="1"/>
</dbReference>
<dbReference type="HAMAP" id="MF_00382">
    <property type="entry name" value="Ribosomal_bL20"/>
    <property type="match status" value="1"/>
</dbReference>
<dbReference type="InterPro" id="IPR005813">
    <property type="entry name" value="Ribosomal_bL20"/>
</dbReference>
<dbReference type="InterPro" id="IPR049946">
    <property type="entry name" value="RIBOSOMAL_L20_CS"/>
</dbReference>
<dbReference type="InterPro" id="IPR035566">
    <property type="entry name" value="Ribosomal_protein_bL20_C"/>
</dbReference>
<dbReference type="NCBIfam" id="TIGR01032">
    <property type="entry name" value="rplT_bact"/>
    <property type="match status" value="1"/>
</dbReference>
<dbReference type="PANTHER" id="PTHR10986">
    <property type="entry name" value="39S RIBOSOMAL PROTEIN L20"/>
    <property type="match status" value="1"/>
</dbReference>
<dbReference type="Pfam" id="PF00453">
    <property type="entry name" value="Ribosomal_L20"/>
    <property type="match status" value="1"/>
</dbReference>
<dbReference type="PRINTS" id="PR00062">
    <property type="entry name" value="RIBOSOMALL20"/>
</dbReference>
<dbReference type="SUPFAM" id="SSF74731">
    <property type="entry name" value="Ribosomal protein L20"/>
    <property type="match status" value="1"/>
</dbReference>
<dbReference type="PROSITE" id="PS00937">
    <property type="entry name" value="RIBOSOMAL_L20"/>
    <property type="match status" value="1"/>
</dbReference>
<reference key="1">
    <citation type="submission" date="2006-12" db="EMBL/GenBank/DDBJ databases">
        <title>Complete sequence of Chlorobium phaeobacteroides DSM 266.</title>
        <authorList>
            <consortium name="US DOE Joint Genome Institute"/>
            <person name="Copeland A."/>
            <person name="Lucas S."/>
            <person name="Lapidus A."/>
            <person name="Barry K."/>
            <person name="Detter J.C."/>
            <person name="Glavina del Rio T."/>
            <person name="Hammon N."/>
            <person name="Israni S."/>
            <person name="Pitluck S."/>
            <person name="Goltsman E."/>
            <person name="Schmutz J."/>
            <person name="Larimer F."/>
            <person name="Land M."/>
            <person name="Hauser L."/>
            <person name="Mikhailova N."/>
            <person name="Li T."/>
            <person name="Overmann J."/>
            <person name="Bryant D.A."/>
            <person name="Richardson P."/>
        </authorList>
    </citation>
    <scope>NUCLEOTIDE SEQUENCE [LARGE SCALE GENOMIC DNA]</scope>
    <source>
        <strain>DSM 266 / SMG 266 / 2430</strain>
    </source>
</reference>
<sequence length="115" mass="13048">MPKANNAVASRARRKRILKKAKGFWGSRGNILTVVKHAVDKAEQYAYRDRRAKKRTFRSLWIMRINAAARLNGTTYSKMVNAMSKKSIEIDRKTLAEIAVKDPAAFSQIVKAVIE</sequence>
<name>RL20_CHLPD</name>
<comment type="function">
    <text evidence="1">Binds directly to 23S ribosomal RNA and is necessary for the in vitro assembly process of the 50S ribosomal subunit. It is not involved in the protein synthesizing functions of that subunit.</text>
</comment>
<comment type="similarity">
    <text evidence="1">Belongs to the bacterial ribosomal protein bL20 family.</text>
</comment>
<accession>A1BJB5</accession>
<keyword id="KW-1185">Reference proteome</keyword>
<keyword id="KW-0687">Ribonucleoprotein</keyword>
<keyword id="KW-0689">Ribosomal protein</keyword>
<keyword id="KW-0694">RNA-binding</keyword>
<keyword id="KW-0699">rRNA-binding</keyword>